<sequence>MVPQGWSLAWVSVLYVSVIPSLHIINNENSVFIGTHSETELRHWLIFVKMAQRSGTAWWRMASVPINAYFERDIAFLFNPRCVIETALGSKILCRYNKNIGVVFVDNDTTCNVSFPSGVQLQLLNQSVMESIRTKTYVVDYARKTTERGDCFISVAFCRKERRRFLPRYERFVYYCISVYLFAVAVFCSCWFALDPLFNMWA</sequence>
<keyword id="KW-1043">Host membrane</keyword>
<keyword id="KW-0472">Membrane</keyword>
<keyword id="KW-1185">Reference proteome</keyword>
<keyword id="KW-0812">Transmembrane</keyword>
<keyword id="KW-1133">Transmembrane helix</keyword>
<reference key="1">
    <citation type="journal article" date="1999" name="J. Virol.">
        <title>Human herpesvirus 6B genome sequence: coding content and comparison with human herpesvirus 6A.</title>
        <authorList>
            <person name="Dominguez G."/>
            <person name="Dambaugh T.R."/>
            <person name="Stamey F.R."/>
            <person name="Dewhurst S."/>
            <person name="Inoue N."/>
            <person name="Pellett P.E."/>
        </authorList>
    </citation>
    <scope>NUCLEOTIDE SEQUENCE [LARGE SCALE GENOMIC DNA]</scope>
</reference>
<accession>Q9QJ44</accession>
<organism>
    <name type="scientific">Human herpesvirus 6B (strain Z29)</name>
    <name type="common">HHV-6 variant B</name>
    <name type="synonym">Human B lymphotropic virus</name>
    <dbReference type="NCBI Taxonomy" id="36351"/>
    <lineage>
        <taxon>Viruses</taxon>
        <taxon>Duplodnaviria</taxon>
        <taxon>Heunggongvirae</taxon>
        <taxon>Peploviricota</taxon>
        <taxon>Herviviricetes</taxon>
        <taxon>Herpesvirales</taxon>
        <taxon>Orthoherpesviridae</taxon>
        <taxon>Betaherpesvirinae</taxon>
        <taxon>Roseolovirus</taxon>
        <taxon>Roseolovirus humanbeta6b</taxon>
        <taxon>Human herpesvirus 6B</taxon>
    </lineage>
</organism>
<comment type="subcellular location">
    <subcellularLocation>
        <location evidence="2">Host membrane</location>
        <topology evidence="2">Multi-pass membrane protein</topology>
    </subcellularLocation>
</comment>
<gene>
    <name type="primary">U22</name>
</gene>
<evidence type="ECO:0000255" key="1"/>
<evidence type="ECO:0000305" key="2"/>
<proteinExistence type="predicted"/>
<feature type="chain" id="PRO_0000408424" description="Protein U22">
    <location>
        <begin position="1"/>
        <end position="202"/>
    </location>
</feature>
<feature type="transmembrane region" description="Helical" evidence="1">
    <location>
        <begin position="5"/>
        <end position="25"/>
    </location>
</feature>
<feature type="transmembrane region" description="Helical" evidence="1">
    <location>
        <begin position="172"/>
        <end position="192"/>
    </location>
</feature>
<organismHost>
    <name type="scientific">Homo sapiens</name>
    <name type="common">Human</name>
    <dbReference type="NCBI Taxonomy" id="9606"/>
</organismHost>
<name>U22_HHV6Z</name>
<dbReference type="EMBL" id="AF157706">
    <property type="protein sequence ID" value="AAD49636.1"/>
    <property type="molecule type" value="Genomic_DNA"/>
</dbReference>
<dbReference type="RefSeq" id="NP_050202.1">
    <property type="nucleotide sequence ID" value="NC_000898.1"/>
</dbReference>
<dbReference type="SMR" id="Q9QJ44"/>
<dbReference type="DNASU" id="1497024"/>
<dbReference type="GeneID" id="1497024"/>
<dbReference type="KEGG" id="vg:1497024"/>
<dbReference type="Proteomes" id="UP000006930">
    <property type="component" value="Segment"/>
</dbReference>
<dbReference type="GO" id="GO:0033644">
    <property type="term" value="C:host cell membrane"/>
    <property type="evidence" value="ECO:0007669"/>
    <property type="project" value="UniProtKB-SubCell"/>
</dbReference>
<dbReference type="GO" id="GO:0016020">
    <property type="term" value="C:membrane"/>
    <property type="evidence" value="ECO:0007669"/>
    <property type="project" value="UniProtKB-KW"/>
</dbReference>
<protein>
    <recommendedName>
        <fullName>Protein U22</fullName>
    </recommendedName>
</protein>